<proteinExistence type="evidence at protein level"/>
<sequence>MEKSNYHSNVNHHKRHMKQSGEKRAFLWAFIISFTVCTLFLGWRLVSVLEATQLPPIPATHTGSGTGVAENPEENTLATAKEQGDEQEWSLILVNRQNPIPAQYDVELEQLSNGERIDIRISPYLQDLFDAARADGVYPIVASGYRTTEKQQEIMDEKVAEYKAKGYTSAQAKAEAETWVAVPGTSEHQLGLAVDINADGIHSTGNEVYRWLDENSYRFGFIRRYPPDKTEITGVSNEPWHYRYVGIEAATKIYHQGLCLEEYLNTEK</sequence>
<dbReference type="EC" id="3.4.17.-" evidence="6"/>
<dbReference type="EMBL" id="U35369">
    <property type="protein sequence ID" value="AAB05624.1"/>
    <property type="molecule type" value="Genomic_DNA"/>
</dbReference>
<dbReference type="EMBL" id="AE016830">
    <property type="protein sequence ID" value="AAO82024.1"/>
    <property type="molecule type" value="Genomic_DNA"/>
</dbReference>
<dbReference type="RefSeq" id="NP_815954.1">
    <property type="nucleotide sequence ID" value="NC_004668.1"/>
</dbReference>
<dbReference type="PDB" id="5HNM">
    <property type="method" value="X-ray"/>
    <property type="resolution" value="2.30 A"/>
    <property type="chains" value="A/B/C/D/E/F=72-268"/>
</dbReference>
<dbReference type="PDB" id="5ZHF">
    <property type="method" value="X-ray"/>
    <property type="resolution" value="1.65 A"/>
    <property type="chains" value="A/B=52-268"/>
</dbReference>
<dbReference type="PDB" id="5ZHW">
    <property type="method" value="X-ray"/>
    <property type="resolution" value="2.18 A"/>
    <property type="chains" value="A/B=52-268"/>
</dbReference>
<dbReference type="PDB" id="6A6A">
    <property type="method" value="X-ray"/>
    <property type="resolution" value="2.26 A"/>
    <property type="chains" value="A/B=52-268"/>
</dbReference>
<dbReference type="PDBsum" id="5HNM"/>
<dbReference type="PDBsum" id="5ZHF"/>
<dbReference type="PDBsum" id="5ZHW"/>
<dbReference type="PDBsum" id="6A6A"/>
<dbReference type="SMR" id="Q47746"/>
<dbReference type="STRING" id="226185.EF_2297"/>
<dbReference type="CARD" id="ARO:3002956">
    <property type="molecule name" value="vanY_in_vanB_cl"/>
    <property type="mechanism identifier" value="ARO:0001001"/>
    <property type="mechanism name" value="antibiotic target alteration"/>
</dbReference>
<dbReference type="EnsemblBacteria" id="AAO82024">
    <property type="protein sequence ID" value="AAO82024"/>
    <property type="gene ID" value="EF_2297"/>
</dbReference>
<dbReference type="KEGG" id="efa:EF2297"/>
<dbReference type="PATRIC" id="fig|226185.45.peg.1235"/>
<dbReference type="eggNOG" id="COG1876">
    <property type="taxonomic scope" value="Bacteria"/>
</dbReference>
<dbReference type="HOGENOM" id="CLU_054193_2_1_9"/>
<dbReference type="Proteomes" id="UP000001415">
    <property type="component" value="Chromosome"/>
</dbReference>
<dbReference type="GO" id="GO:0005886">
    <property type="term" value="C:plasma membrane"/>
    <property type="evidence" value="ECO:0007669"/>
    <property type="project" value="UniProtKB-SubCell"/>
</dbReference>
<dbReference type="GO" id="GO:0004180">
    <property type="term" value="F:carboxypeptidase activity"/>
    <property type="evidence" value="ECO:0007669"/>
    <property type="project" value="UniProtKB-KW"/>
</dbReference>
<dbReference type="GO" id="GO:0046872">
    <property type="term" value="F:metal ion binding"/>
    <property type="evidence" value="ECO:0007669"/>
    <property type="project" value="UniProtKB-KW"/>
</dbReference>
<dbReference type="GO" id="GO:0071555">
    <property type="term" value="P:cell wall organization"/>
    <property type="evidence" value="ECO:0007669"/>
    <property type="project" value="UniProtKB-KW"/>
</dbReference>
<dbReference type="GO" id="GO:0009252">
    <property type="term" value="P:peptidoglycan biosynthetic process"/>
    <property type="evidence" value="ECO:0007669"/>
    <property type="project" value="UniProtKB-KW"/>
</dbReference>
<dbReference type="GO" id="GO:0006508">
    <property type="term" value="P:proteolysis"/>
    <property type="evidence" value="ECO:0007669"/>
    <property type="project" value="UniProtKB-KW"/>
</dbReference>
<dbReference type="GO" id="GO:0008360">
    <property type="term" value="P:regulation of cell shape"/>
    <property type="evidence" value="ECO:0007669"/>
    <property type="project" value="UniProtKB-KW"/>
</dbReference>
<dbReference type="GO" id="GO:0046677">
    <property type="term" value="P:response to antibiotic"/>
    <property type="evidence" value="ECO:0007669"/>
    <property type="project" value="UniProtKB-KW"/>
</dbReference>
<dbReference type="CDD" id="cd14852">
    <property type="entry name" value="LD-carboxypeptidase"/>
    <property type="match status" value="1"/>
</dbReference>
<dbReference type="Gene3D" id="3.30.1380.10">
    <property type="match status" value="1"/>
</dbReference>
<dbReference type="InterPro" id="IPR052179">
    <property type="entry name" value="Bact_PeptidoProc_Enz"/>
</dbReference>
<dbReference type="InterPro" id="IPR009045">
    <property type="entry name" value="Hedgehog_sig/DD-Pept_Zn-bd_sf"/>
</dbReference>
<dbReference type="InterPro" id="IPR003709">
    <property type="entry name" value="Pept_M15B"/>
</dbReference>
<dbReference type="NCBIfam" id="NF000473">
    <property type="entry name" value="vanY_BG"/>
    <property type="match status" value="1"/>
</dbReference>
<dbReference type="PANTHER" id="PTHR34385">
    <property type="entry name" value="D-ALANYL-D-ALANINE CARBOXYPEPTIDASE"/>
    <property type="match status" value="1"/>
</dbReference>
<dbReference type="PANTHER" id="PTHR34385:SF1">
    <property type="entry name" value="PEPTIDOGLYCAN L-ALANYL-D-GLUTAMATE ENDOPEPTIDASE CWLK"/>
    <property type="match status" value="1"/>
</dbReference>
<dbReference type="Pfam" id="PF02557">
    <property type="entry name" value="VanY"/>
    <property type="match status" value="1"/>
</dbReference>
<dbReference type="SUPFAM" id="SSF55166">
    <property type="entry name" value="Hedgehog/DD-peptidase"/>
    <property type="match status" value="1"/>
</dbReference>
<name>VANY_ENTFA</name>
<organism>
    <name type="scientific">Enterococcus faecalis (strain ATCC 700802 / V583)</name>
    <dbReference type="NCBI Taxonomy" id="226185"/>
    <lineage>
        <taxon>Bacteria</taxon>
        <taxon>Bacillati</taxon>
        <taxon>Bacillota</taxon>
        <taxon>Bacilli</taxon>
        <taxon>Lactobacillales</taxon>
        <taxon>Enterococcaceae</taxon>
        <taxon>Enterococcus</taxon>
    </lineage>
</organism>
<evidence type="ECO:0000255" key="1"/>
<evidence type="ECO:0000269" key="2">
    <source>
    </source>
</evidence>
<evidence type="ECO:0000269" key="3">
    <source>
    </source>
</evidence>
<evidence type="ECO:0000303" key="4">
    <source>
    </source>
</evidence>
<evidence type="ECO:0000303" key="5">
    <source>
    </source>
</evidence>
<evidence type="ECO:0000305" key="6"/>
<evidence type="ECO:0000305" key="7">
    <source>
    </source>
</evidence>
<evidence type="ECO:0000305" key="8">
    <source>
    </source>
</evidence>
<evidence type="ECO:0007744" key="9">
    <source>
        <dbReference type="PDB" id="5HNM"/>
    </source>
</evidence>
<evidence type="ECO:0007744" key="10">
    <source>
        <dbReference type="PDB" id="5ZHF"/>
    </source>
</evidence>
<evidence type="ECO:0007744" key="11">
    <source>
        <dbReference type="PDB" id="5ZHW"/>
    </source>
</evidence>
<evidence type="ECO:0007744" key="12">
    <source>
        <dbReference type="PDB" id="6A6A"/>
    </source>
</evidence>
<evidence type="ECO:0007829" key="13">
    <source>
        <dbReference type="PDB" id="5HNM"/>
    </source>
</evidence>
<evidence type="ECO:0007829" key="14">
    <source>
        <dbReference type="PDB" id="5ZHF"/>
    </source>
</evidence>
<comment type="function">
    <text evidence="3">Carboxypeptidase that cleaves the C-terminal D-alanine residue from the peptidoglycan-derived pentapeptide L-Ala-gamma-D-Glu-L-Lys-D-Ala-D-Ala in vitro. Therefore, should contribute in vivo to the hydrolysis of the D-alanyl-D-alanine-containing peptidoglycan precursors. May increase the level of glycopeptide antibiotics resistance by decreasing the availability of D-Ala-D-Ala termini from the cell surface, which constitute the antibiotic target residues.</text>
</comment>
<comment type="cofactor">
    <cofactor evidence="2">
        <name>Zn(2+)</name>
        <dbReference type="ChEBI" id="CHEBI:29105"/>
    </cofactor>
</comment>
<comment type="activity regulation">
    <text evidence="3">Carboxypeptidase activity is insensitive to beta-lactams since it is not affected by penicillin G or ampicillin and is inhibited only by very high concentrations of cefalotin and cefoxitin.</text>
</comment>
<comment type="subunit">
    <text evidence="2">Monomer.</text>
</comment>
<comment type="subcellular location">
    <subcellularLocation>
        <location evidence="8">Cell membrane</location>
        <topology evidence="1">Single-pass membrane protein</topology>
    </subcellularLocation>
</comment>
<comment type="induction">
    <text evidence="3">By vancomycin, mediated by VanS/VanR. Part of the VanB-type operon associated to vancomycin resistance in E.faecalis V583.</text>
</comment>
<comment type="similarity">
    <text evidence="6">Belongs to the peptidase M15B family.</text>
</comment>
<reference key="1">
    <citation type="journal article" date="1996" name="J. Bacteriol.">
        <title>Regulation of VanB-type vancomycin resistance gene expression by the VanS(B)-VanR(B) two-component regulatory system in Enterococcus faecalis V583.</title>
        <authorList>
            <person name="Evers S."/>
            <person name="Courvalin P."/>
        </authorList>
    </citation>
    <scope>NUCLEOTIDE SEQUENCE [GENOMIC DNA]</scope>
    <scope>FUNCTION</scope>
    <scope>CATALYTIC ACTIVITY</scope>
    <scope>ACTIVITY REGULATION</scope>
    <scope>INDUCTION</scope>
    <scope>SUBCELLULAR LOCATION</scope>
    <source>
        <strain>ATCC 700802 / V583</strain>
    </source>
</reference>
<reference key="2">
    <citation type="journal article" date="2003" name="Science">
        <title>Role of mobile DNA in the evolution of vancomycin-resistant Enterococcus faecalis.</title>
        <authorList>
            <person name="Paulsen I.T."/>
            <person name="Banerjei L."/>
            <person name="Myers G.S.A."/>
            <person name="Nelson K.E."/>
            <person name="Seshadri R."/>
            <person name="Read T.D."/>
            <person name="Fouts D.E."/>
            <person name="Eisen J.A."/>
            <person name="Gill S.R."/>
            <person name="Heidelberg J.F."/>
            <person name="Tettelin H."/>
            <person name="Dodson R.J."/>
            <person name="Umayam L.A."/>
            <person name="Brinkac L.M."/>
            <person name="Beanan M.J."/>
            <person name="Daugherty S.C."/>
            <person name="DeBoy R.T."/>
            <person name="Durkin S.A."/>
            <person name="Kolonay J.F."/>
            <person name="Madupu R."/>
            <person name="Nelson W.C."/>
            <person name="Vamathevan J.J."/>
            <person name="Tran B."/>
            <person name="Upton J."/>
            <person name="Hansen T."/>
            <person name="Shetty J."/>
            <person name="Khouri H.M."/>
            <person name="Utterback T.R."/>
            <person name="Radune D."/>
            <person name="Ketchum K.A."/>
            <person name="Dougherty B.A."/>
            <person name="Fraser C.M."/>
        </authorList>
    </citation>
    <scope>NUCLEOTIDE SEQUENCE [LARGE SCALE GENOMIC DNA]</scope>
    <source>
        <strain>ATCC 700802 / V583</strain>
    </source>
</reference>
<reference evidence="9" key="3">
    <citation type="submission" date="2016-01" db="PDB data bank">
        <title>To be published.</title>
        <authorList>
            <person name="Stogios P.J."/>
        </authorList>
    </citation>
    <scope>X-RAY CRYSTALLOGRAPHY (2.30 ANGSTROMS) OF 72-268 IN COMPLEX WITH ZINC</scope>
</reference>
<reference evidence="10 11 12" key="4">
    <citation type="journal article" date="2018" name="Int. J. Biol. Macromol.">
        <title>Structural basis for the substrate recognition of peptidoglycan pentapeptides by Enterococcus faecalis VanYB.</title>
        <authorList>
            <person name="Kim H.S."/>
            <person name="Hahn H."/>
            <person name="Kim J."/>
            <person name="Jang D.M."/>
            <person name="Lee J.Y."/>
            <person name="Back J.M."/>
            <person name="Im H.N."/>
            <person name="Kim H."/>
            <person name="Han B.W."/>
            <person name="Suh S.W."/>
        </authorList>
    </citation>
    <scope>X-RAY CRYSTALLOGRAPHY (1.65 ANGSTROMS) OF 52-268 IN COMPLEXES WITH ZINC; D-ALA-D-ALA DIPEPTIDE AND D-ALA</scope>
    <scope>COFACTOR</scope>
    <scope>SUBUNIT</scope>
    <scope>ACTIVE SITE</scope>
    <scope>REACTION MECHANISM</scope>
    <source>
        <strain>ATCC 700802 / V583</strain>
    </source>
</reference>
<gene>
    <name evidence="5" type="primary">vanYB</name>
    <name type="ordered locus">EF_2297</name>
</gene>
<protein>
    <recommendedName>
        <fullName evidence="6">D-alanyl-D-alanine carboxypeptidase</fullName>
        <shortName evidence="4 5">D,D-carboxypeptidase</shortName>
        <shortName evidence="6">D-Ala-D-Ala carboxypeptidase</shortName>
        <ecNumber evidence="6">3.4.17.-</ecNumber>
    </recommendedName>
</protein>
<accession>Q47746</accession>
<feature type="chain" id="PRO_0000195471" description="D-alanyl-D-alanine carboxypeptidase">
    <location>
        <begin position="1"/>
        <end position="268"/>
    </location>
</feature>
<feature type="transmembrane region" description="Helical" evidence="1">
    <location>
        <begin position="25"/>
        <end position="47"/>
    </location>
</feature>
<feature type="active site" description="Proton donor/acceptor" evidence="7">
    <location>
        <position position="238"/>
    </location>
</feature>
<feature type="binding site" evidence="2">
    <location>
        <position position="151"/>
    </location>
    <ligand>
        <name>substrate</name>
    </ligand>
</feature>
<feature type="binding site" evidence="2">
    <location>
        <begin position="179"/>
        <end position="181"/>
    </location>
    <ligand>
        <name>substrate</name>
    </ligand>
</feature>
<feature type="binding site" evidence="2">
    <location>
        <position position="186"/>
    </location>
    <ligand>
        <name>substrate</name>
    </ligand>
</feature>
<feature type="binding site" evidence="2 9">
    <location>
        <position position="188"/>
    </location>
    <ligand>
        <name>Zn(2+)</name>
        <dbReference type="ChEBI" id="CHEBI:29105"/>
    </ligand>
</feature>
<feature type="binding site" evidence="2 9">
    <location>
        <position position="195"/>
    </location>
    <ligand>
        <name>Zn(2+)</name>
        <dbReference type="ChEBI" id="CHEBI:29105"/>
    </ligand>
</feature>
<feature type="binding site" evidence="2 9">
    <location>
        <position position="241"/>
    </location>
    <ligand>
        <name>Zn(2+)</name>
        <dbReference type="ChEBI" id="CHEBI:29105"/>
    </ligand>
</feature>
<feature type="helix" evidence="14">
    <location>
        <begin position="89"/>
        <end position="91"/>
    </location>
</feature>
<feature type="strand" evidence="13">
    <location>
        <begin position="95"/>
        <end position="98"/>
    </location>
</feature>
<feature type="strand" evidence="14">
    <location>
        <begin position="108"/>
        <end position="110"/>
    </location>
</feature>
<feature type="strand" evidence="14">
    <location>
        <begin position="116"/>
        <end position="118"/>
    </location>
</feature>
<feature type="helix" evidence="14">
    <location>
        <begin position="119"/>
        <end position="121"/>
    </location>
</feature>
<feature type="helix" evidence="14">
    <location>
        <begin position="122"/>
        <end position="134"/>
    </location>
</feature>
<feature type="strand" evidence="14">
    <location>
        <begin position="139"/>
        <end position="143"/>
    </location>
</feature>
<feature type="helix" evidence="14">
    <location>
        <begin position="148"/>
        <end position="164"/>
    </location>
</feature>
<feature type="helix" evidence="14">
    <location>
        <begin position="169"/>
        <end position="176"/>
    </location>
</feature>
<feature type="turn" evidence="14">
    <location>
        <begin position="177"/>
        <end position="179"/>
    </location>
</feature>
<feature type="helix" evidence="14">
    <location>
        <begin position="187"/>
        <end position="190"/>
    </location>
</feature>
<feature type="strand" evidence="14">
    <location>
        <begin position="193"/>
        <end position="198"/>
    </location>
</feature>
<feature type="strand" evidence="14">
    <location>
        <begin position="200"/>
        <end position="202"/>
    </location>
</feature>
<feature type="helix" evidence="14">
    <location>
        <begin position="205"/>
        <end position="215"/>
    </location>
</feature>
<feature type="helix" evidence="14">
    <location>
        <begin position="216"/>
        <end position="219"/>
    </location>
</feature>
<feature type="strand" evidence="14">
    <location>
        <begin position="221"/>
        <end position="225"/>
    </location>
</feature>
<feature type="helix" evidence="14">
    <location>
        <begin position="227"/>
        <end position="229"/>
    </location>
</feature>
<feature type="helix" evidence="14">
    <location>
        <begin position="230"/>
        <end position="233"/>
    </location>
</feature>
<feature type="strand" evidence="14">
    <location>
        <begin position="241"/>
        <end position="244"/>
    </location>
</feature>
<feature type="helix" evidence="14">
    <location>
        <begin position="247"/>
        <end position="256"/>
    </location>
</feature>
<feature type="helix" evidence="14">
    <location>
        <begin position="260"/>
        <end position="266"/>
    </location>
</feature>
<keyword id="KW-0002">3D-structure</keyword>
<keyword id="KW-0046">Antibiotic resistance</keyword>
<keyword id="KW-0121">Carboxypeptidase</keyword>
<keyword id="KW-1003">Cell membrane</keyword>
<keyword id="KW-0133">Cell shape</keyword>
<keyword id="KW-0961">Cell wall biogenesis/degradation</keyword>
<keyword id="KW-0378">Hydrolase</keyword>
<keyword id="KW-0472">Membrane</keyword>
<keyword id="KW-0479">Metal-binding</keyword>
<keyword id="KW-0573">Peptidoglycan synthesis</keyword>
<keyword id="KW-0645">Protease</keyword>
<keyword id="KW-1185">Reference proteome</keyword>
<keyword id="KW-0812">Transmembrane</keyword>
<keyword id="KW-1133">Transmembrane helix</keyword>
<keyword id="KW-0862">Zinc</keyword>